<gene>
    <name type="primary">LACS5</name>
    <name type="ordered locus">At4g11030</name>
    <name type="ORF">F8M12.15</name>
    <name type="ORF">T22B4.10</name>
</gene>
<organism>
    <name type="scientific">Arabidopsis thaliana</name>
    <name type="common">Mouse-ear cress</name>
    <dbReference type="NCBI Taxonomy" id="3702"/>
    <lineage>
        <taxon>Eukaryota</taxon>
        <taxon>Viridiplantae</taxon>
        <taxon>Streptophyta</taxon>
        <taxon>Embryophyta</taxon>
        <taxon>Tracheophyta</taxon>
        <taxon>Spermatophyta</taxon>
        <taxon>Magnoliopsida</taxon>
        <taxon>eudicotyledons</taxon>
        <taxon>Gunneridae</taxon>
        <taxon>Pentapetalae</taxon>
        <taxon>rosids</taxon>
        <taxon>malvids</taxon>
        <taxon>Brassicales</taxon>
        <taxon>Brassicaceae</taxon>
        <taxon>Camelineae</taxon>
        <taxon>Arabidopsis</taxon>
    </lineage>
</organism>
<dbReference type="EC" id="6.2.1.3"/>
<dbReference type="EMBL" id="AF503755">
    <property type="protein sequence ID" value="AAM28872.1"/>
    <property type="molecule type" value="mRNA"/>
</dbReference>
<dbReference type="EMBL" id="AF080118">
    <property type="protein sequence ID" value="AAC33962.1"/>
    <property type="status" value="ALT_SEQ"/>
    <property type="molecule type" value="Genomic_DNA"/>
</dbReference>
<dbReference type="EMBL" id="AL049876">
    <property type="protein sequence ID" value="CAB43038.1"/>
    <property type="molecule type" value="Genomic_DNA"/>
</dbReference>
<dbReference type="EMBL" id="AL161518">
    <property type="protein sequence ID" value="CAB81204.1"/>
    <property type="molecule type" value="Genomic_DNA"/>
</dbReference>
<dbReference type="EMBL" id="CP002687">
    <property type="protein sequence ID" value="AEE82963.1"/>
    <property type="molecule type" value="Genomic_DNA"/>
</dbReference>
<dbReference type="EMBL" id="BT046194">
    <property type="protein sequence ID" value="ACI49793.1"/>
    <property type="molecule type" value="mRNA"/>
</dbReference>
<dbReference type="PIR" id="T01875">
    <property type="entry name" value="T01875"/>
</dbReference>
<dbReference type="PIR" id="T04298">
    <property type="entry name" value="T04298"/>
</dbReference>
<dbReference type="PIR" id="T08182">
    <property type="entry name" value="T08182"/>
</dbReference>
<dbReference type="RefSeq" id="NP_192841.1">
    <property type="nucleotide sequence ID" value="NM_117173.2"/>
</dbReference>
<dbReference type="SMR" id="Q9T009"/>
<dbReference type="FunCoup" id="Q9T009">
    <property type="interactions" value="153"/>
</dbReference>
<dbReference type="STRING" id="3702.Q9T009"/>
<dbReference type="PaxDb" id="3702-AT4G11030.1"/>
<dbReference type="ProteomicsDB" id="237055"/>
<dbReference type="EnsemblPlants" id="AT4G11030.1">
    <property type="protein sequence ID" value="AT4G11030.1"/>
    <property type="gene ID" value="AT4G11030"/>
</dbReference>
<dbReference type="GeneID" id="826704"/>
<dbReference type="Gramene" id="AT4G11030.1">
    <property type="protein sequence ID" value="AT4G11030.1"/>
    <property type="gene ID" value="AT4G11030"/>
</dbReference>
<dbReference type="KEGG" id="ath:AT4G11030"/>
<dbReference type="Araport" id="AT4G11030"/>
<dbReference type="TAIR" id="AT4G11030">
    <property type="gene designation" value="LACS5"/>
</dbReference>
<dbReference type="eggNOG" id="KOG1256">
    <property type="taxonomic scope" value="Eukaryota"/>
</dbReference>
<dbReference type="HOGENOM" id="CLU_000022_45_4_1"/>
<dbReference type="InParanoid" id="Q9T009"/>
<dbReference type="OMA" id="TNMSFQL"/>
<dbReference type="PhylomeDB" id="Q9T009"/>
<dbReference type="BioCyc" id="ARA:AT4G11030-MONOMER"/>
<dbReference type="BioCyc" id="MetaCyc:AT4G11030-MONOMER"/>
<dbReference type="UniPathway" id="UPA00199"/>
<dbReference type="PRO" id="PR:Q9T009"/>
<dbReference type="Proteomes" id="UP000006548">
    <property type="component" value="Chromosome 4"/>
</dbReference>
<dbReference type="ExpressionAtlas" id="Q9T009">
    <property type="expression patterns" value="baseline and differential"/>
</dbReference>
<dbReference type="GO" id="GO:0005524">
    <property type="term" value="F:ATP binding"/>
    <property type="evidence" value="ECO:0007669"/>
    <property type="project" value="UniProtKB-KW"/>
</dbReference>
<dbReference type="GO" id="GO:0004467">
    <property type="term" value="F:long-chain fatty acid-CoA ligase activity"/>
    <property type="evidence" value="ECO:0000314"/>
    <property type="project" value="UniProtKB"/>
</dbReference>
<dbReference type="GO" id="GO:0006631">
    <property type="term" value="P:fatty acid metabolic process"/>
    <property type="evidence" value="ECO:0000304"/>
    <property type="project" value="UniProtKB"/>
</dbReference>
<dbReference type="CDD" id="cd05927">
    <property type="entry name" value="LC-FACS_euk"/>
    <property type="match status" value="1"/>
</dbReference>
<dbReference type="Gene3D" id="3.40.50.12780">
    <property type="entry name" value="N-terminal domain of ligase-like"/>
    <property type="match status" value="1"/>
</dbReference>
<dbReference type="InterPro" id="IPR020845">
    <property type="entry name" value="AMP-binding_CS"/>
</dbReference>
<dbReference type="InterPro" id="IPR000873">
    <property type="entry name" value="AMP-dep_synth/lig_dom"/>
</dbReference>
<dbReference type="InterPro" id="IPR042099">
    <property type="entry name" value="ANL_N_sf"/>
</dbReference>
<dbReference type="InterPro" id="IPR045311">
    <property type="entry name" value="LC-FACS_euk"/>
</dbReference>
<dbReference type="PANTHER" id="PTHR43272:SF55">
    <property type="entry name" value="LONG CHAIN ACYL-COA SYNTHETASE 5"/>
    <property type="match status" value="1"/>
</dbReference>
<dbReference type="PANTHER" id="PTHR43272">
    <property type="entry name" value="LONG-CHAIN-FATTY-ACID--COA LIGASE"/>
    <property type="match status" value="1"/>
</dbReference>
<dbReference type="Pfam" id="PF00501">
    <property type="entry name" value="AMP-binding"/>
    <property type="match status" value="1"/>
</dbReference>
<dbReference type="SUPFAM" id="SSF56801">
    <property type="entry name" value="Acetyl-CoA synthetase-like"/>
    <property type="match status" value="1"/>
</dbReference>
<dbReference type="PROSITE" id="PS00455">
    <property type="entry name" value="AMP_BINDING"/>
    <property type="match status" value="1"/>
</dbReference>
<keyword id="KW-0067">ATP-binding</keyword>
<keyword id="KW-0276">Fatty acid metabolism</keyword>
<keyword id="KW-0436">Ligase</keyword>
<keyword id="KW-0443">Lipid metabolism</keyword>
<keyword id="KW-0460">Magnesium</keyword>
<keyword id="KW-0547">Nucleotide-binding</keyword>
<keyword id="KW-1185">Reference proteome</keyword>
<comment type="function">
    <text>Activation of long-chain fatty acids for both synthesis of cellular lipids, and degradation via beta-oxidation. Preferentially uses palmitate, palmitoleate, oleate and linoleate.</text>
</comment>
<comment type="catalytic activity">
    <reaction evidence="3">
        <text>a long-chain fatty acid + ATP + CoA = a long-chain fatty acyl-CoA + AMP + diphosphate</text>
        <dbReference type="Rhea" id="RHEA:15421"/>
        <dbReference type="ChEBI" id="CHEBI:30616"/>
        <dbReference type="ChEBI" id="CHEBI:33019"/>
        <dbReference type="ChEBI" id="CHEBI:57287"/>
        <dbReference type="ChEBI" id="CHEBI:57560"/>
        <dbReference type="ChEBI" id="CHEBI:83139"/>
        <dbReference type="ChEBI" id="CHEBI:456215"/>
        <dbReference type="EC" id="6.2.1.3"/>
    </reaction>
</comment>
<comment type="cofactor">
    <cofactor evidence="1">
        <name>Mg(2+)</name>
        <dbReference type="ChEBI" id="CHEBI:18420"/>
    </cofactor>
</comment>
<comment type="pathway">
    <text>Lipid metabolism; fatty acid metabolism.</text>
</comment>
<comment type="similarity">
    <text evidence="4">Belongs to the ATP-dependent AMP-binding enzyme family.</text>
</comment>
<comment type="sequence caution" evidence="4">
    <conflict type="erroneous gene model prediction">
        <sequence resource="EMBL-CDS" id="AAC33962"/>
    </conflict>
</comment>
<proteinExistence type="evidence at transcript level"/>
<sequence length="666" mass="74064">MTSQKRFIFEVEAAKEATDGNPSVGPVYRSTFAQNGFPNPIDGIQSCWDIFRTAVEKYPNNRMLGRREISNGKAGKYVWKTYKEVYDIVIKLGNSLRSCGIKEGEKCGIYGINCCEWIISMEACNAHGLYCVPLYDTLGAGAVEFIISHAEVSIAFVEEKKIPELFKTCPNSTKYMKTVVSFGGVKPEQKEEAEKLGLVIHSWDEFLKLGEGKQYELPIKKPSDICTIMYTSGTTGDPKGVMISNESIVTITTGVMHFLGNVNASLSEKDVYISYLPLAHVFDRAIEECIIQVGGSIGFWRGDVKLLIEDLGELKPSIFCAVPRVLDRVYTGLQQKLSGGGFFKKKVFDVAFSYKFGNMKKGQSHVAASPFCDKLVFNKVKQGLGGNVRIILSGAAPLASHIESFLRVVACCNVLQGYGLTESCAGTFATFPDELDMLGTVGPPVPNVDIRLESVPEMNYDALGSTPRGEICIRGKTLFSGYYKREDLTKEVFIDGWLHTGDVGEWQPNGSMKIIDRKKNIFKLAQGEYVAVENLENVYSQVEVIESIWVYGNSFESFLVAIANPAQQTLERWAVENGVNGDFNSICQNAKAKAFILGELVKTAKENKLKGFEIIKDVHLEPVAFDMERDLLTPTYKKKRPQLLKYYQNVIHEMYKTTKESLASGQ</sequence>
<name>LACS5_ARATH</name>
<evidence type="ECO:0000250" key="1"/>
<evidence type="ECO:0000255" key="2"/>
<evidence type="ECO:0000269" key="3">
    <source>
    </source>
</evidence>
<evidence type="ECO:0000305" key="4"/>
<reference key="1">
    <citation type="journal article" date="2002" name="Plant Physiol.">
        <title>Arabidopsis contains nine long-chain acyl-coenzyme A synthetase genes that participate in fatty acid and glycerolipid metabolism.</title>
        <authorList>
            <person name="Shockey J.M."/>
            <person name="Fulda M.S."/>
            <person name="Browse J.A."/>
        </authorList>
    </citation>
    <scope>NUCLEOTIDE SEQUENCE [MRNA]</scope>
    <scope>GENE FAMILY</scope>
    <scope>ENZYME ACTIVITY</scope>
</reference>
<reference key="2">
    <citation type="journal article" date="1999" name="Nature">
        <title>Sequence and analysis of chromosome 4 of the plant Arabidopsis thaliana.</title>
        <authorList>
            <person name="Mayer K.F.X."/>
            <person name="Schueller C."/>
            <person name="Wambutt R."/>
            <person name="Murphy G."/>
            <person name="Volckaert G."/>
            <person name="Pohl T."/>
            <person name="Duesterhoeft A."/>
            <person name="Stiekema W."/>
            <person name="Entian K.-D."/>
            <person name="Terryn N."/>
            <person name="Harris B."/>
            <person name="Ansorge W."/>
            <person name="Brandt P."/>
            <person name="Grivell L.A."/>
            <person name="Rieger M."/>
            <person name="Weichselgartner M."/>
            <person name="de Simone V."/>
            <person name="Obermaier B."/>
            <person name="Mache R."/>
            <person name="Mueller M."/>
            <person name="Kreis M."/>
            <person name="Delseny M."/>
            <person name="Puigdomenech P."/>
            <person name="Watson M."/>
            <person name="Schmidtheini T."/>
            <person name="Reichert B."/>
            <person name="Portetelle D."/>
            <person name="Perez-Alonso M."/>
            <person name="Boutry M."/>
            <person name="Bancroft I."/>
            <person name="Vos P."/>
            <person name="Hoheisel J."/>
            <person name="Zimmermann W."/>
            <person name="Wedler H."/>
            <person name="Ridley P."/>
            <person name="Langham S.-A."/>
            <person name="McCullagh B."/>
            <person name="Bilham L."/>
            <person name="Robben J."/>
            <person name="van der Schueren J."/>
            <person name="Grymonprez B."/>
            <person name="Chuang Y.-J."/>
            <person name="Vandenbussche F."/>
            <person name="Braeken M."/>
            <person name="Weltjens I."/>
            <person name="Voet M."/>
            <person name="Bastiaens I."/>
            <person name="Aert R."/>
            <person name="Defoor E."/>
            <person name="Weitzenegger T."/>
            <person name="Bothe G."/>
            <person name="Ramsperger U."/>
            <person name="Hilbert H."/>
            <person name="Braun M."/>
            <person name="Holzer E."/>
            <person name="Brandt A."/>
            <person name="Peters S."/>
            <person name="van Staveren M."/>
            <person name="Dirkse W."/>
            <person name="Mooijman P."/>
            <person name="Klein Lankhorst R."/>
            <person name="Rose M."/>
            <person name="Hauf J."/>
            <person name="Koetter P."/>
            <person name="Berneiser S."/>
            <person name="Hempel S."/>
            <person name="Feldpausch M."/>
            <person name="Lamberth S."/>
            <person name="Van den Daele H."/>
            <person name="De Keyser A."/>
            <person name="Buysshaert C."/>
            <person name="Gielen J."/>
            <person name="Villarroel R."/>
            <person name="De Clercq R."/>
            <person name="van Montagu M."/>
            <person name="Rogers J."/>
            <person name="Cronin A."/>
            <person name="Quail M.A."/>
            <person name="Bray-Allen S."/>
            <person name="Clark L."/>
            <person name="Doggett J."/>
            <person name="Hall S."/>
            <person name="Kay M."/>
            <person name="Lennard N."/>
            <person name="McLay K."/>
            <person name="Mayes R."/>
            <person name="Pettett A."/>
            <person name="Rajandream M.A."/>
            <person name="Lyne M."/>
            <person name="Benes V."/>
            <person name="Rechmann S."/>
            <person name="Borkova D."/>
            <person name="Bloecker H."/>
            <person name="Scharfe M."/>
            <person name="Grimm M."/>
            <person name="Loehnert T.-H."/>
            <person name="Dose S."/>
            <person name="de Haan M."/>
            <person name="Maarse A.C."/>
            <person name="Schaefer M."/>
            <person name="Mueller-Auer S."/>
            <person name="Gabel C."/>
            <person name="Fuchs M."/>
            <person name="Fartmann B."/>
            <person name="Granderath K."/>
            <person name="Dauner D."/>
            <person name="Herzl A."/>
            <person name="Neumann S."/>
            <person name="Argiriou A."/>
            <person name="Vitale D."/>
            <person name="Liguori R."/>
            <person name="Piravandi E."/>
            <person name="Massenet O."/>
            <person name="Quigley F."/>
            <person name="Clabauld G."/>
            <person name="Muendlein A."/>
            <person name="Felber R."/>
            <person name="Schnabl S."/>
            <person name="Hiller R."/>
            <person name="Schmidt W."/>
            <person name="Lecharny A."/>
            <person name="Aubourg S."/>
            <person name="Chefdor F."/>
            <person name="Cooke R."/>
            <person name="Berger C."/>
            <person name="Monfort A."/>
            <person name="Casacuberta E."/>
            <person name="Gibbons T."/>
            <person name="Weber N."/>
            <person name="Vandenbol M."/>
            <person name="Bargues M."/>
            <person name="Terol J."/>
            <person name="Torres A."/>
            <person name="Perez-Perez A."/>
            <person name="Purnelle B."/>
            <person name="Bent E."/>
            <person name="Johnson S."/>
            <person name="Tacon D."/>
            <person name="Jesse T."/>
            <person name="Heijnen L."/>
            <person name="Schwarz S."/>
            <person name="Scholler P."/>
            <person name="Heber S."/>
            <person name="Francs P."/>
            <person name="Bielke C."/>
            <person name="Frishman D."/>
            <person name="Haase D."/>
            <person name="Lemcke K."/>
            <person name="Mewes H.-W."/>
            <person name="Stocker S."/>
            <person name="Zaccaria P."/>
            <person name="Bevan M."/>
            <person name="Wilson R.K."/>
            <person name="de la Bastide M."/>
            <person name="Habermann K."/>
            <person name="Parnell L."/>
            <person name="Dedhia N."/>
            <person name="Gnoj L."/>
            <person name="Schutz K."/>
            <person name="Huang E."/>
            <person name="Spiegel L."/>
            <person name="Sekhon M."/>
            <person name="Murray J."/>
            <person name="Sheet P."/>
            <person name="Cordes M."/>
            <person name="Abu-Threideh J."/>
            <person name="Stoneking T."/>
            <person name="Kalicki J."/>
            <person name="Graves T."/>
            <person name="Harmon G."/>
            <person name="Edwards J."/>
            <person name="Latreille P."/>
            <person name="Courtney L."/>
            <person name="Cloud J."/>
            <person name="Abbott A."/>
            <person name="Scott K."/>
            <person name="Johnson D."/>
            <person name="Minx P."/>
            <person name="Bentley D."/>
            <person name="Fulton B."/>
            <person name="Miller N."/>
            <person name="Greco T."/>
            <person name="Kemp K."/>
            <person name="Kramer J."/>
            <person name="Fulton L."/>
            <person name="Mardis E."/>
            <person name="Dante M."/>
            <person name="Pepin K."/>
            <person name="Hillier L.W."/>
            <person name="Nelson J."/>
            <person name="Spieth J."/>
            <person name="Ryan E."/>
            <person name="Andrews S."/>
            <person name="Geisel C."/>
            <person name="Layman D."/>
            <person name="Du H."/>
            <person name="Ali J."/>
            <person name="Berghoff A."/>
            <person name="Jones K."/>
            <person name="Drone K."/>
            <person name="Cotton M."/>
            <person name="Joshu C."/>
            <person name="Antonoiu B."/>
            <person name="Zidanic M."/>
            <person name="Strong C."/>
            <person name="Sun H."/>
            <person name="Lamar B."/>
            <person name="Yordan C."/>
            <person name="Ma P."/>
            <person name="Zhong J."/>
            <person name="Preston R."/>
            <person name="Vil D."/>
            <person name="Shekher M."/>
            <person name="Matero A."/>
            <person name="Shah R."/>
            <person name="Swaby I.K."/>
            <person name="O'Shaughnessy A."/>
            <person name="Rodriguez M."/>
            <person name="Hoffman J."/>
            <person name="Till S."/>
            <person name="Granat S."/>
            <person name="Shohdy N."/>
            <person name="Hasegawa A."/>
            <person name="Hameed A."/>
            <person name="Lodhi M."/>
            <person name="Johnson A."/>
            <person name="Chen E."/>
            <person name="Marra M.A."/>
            <person name="Martienssen R."/>
            <person name="McCombie W.R."/>
        </authorList>
    </citation>
    <scope>NUCLEOTIDE SEQUENCE [LARGE SCALE GENOMIC DNA]</scope>
    <source>
        <strain>cv. Columbia</strain>
    </source>
</reference>
<reference key="3">
    <citation type="journal article" date="2017" name="Plant J.">
        <title>Araport11: a complete reannotation of the Arabidopsis thaliana reference genome.</title>
        <authorList>
            <person name="Cheng C.Y."/>
            <person name="Krishnakumar V."/>
            <person name="Chan A.P."/>
            <person name="Thibaud-Nissen F."/>
            <person name="Schobel S."/>
            <person name="Town C.D."/>
        </authorList>
    </citation>
    <scope>GENOME REANNOTATION</scope>
    <source>
        <strain>cv. Columbia</strain>
    </source>
</reference>
<reference key="4">
    <citation type="submission" date="2008-06" db="EMBL/GenBank/DDBJ databases">
        <title>Arabidopsis ORF clones.</title>
        <authorList>
            <person name="De Los Reyes C."/>
            <person name="Quan R."/>
            <person name="Chen H."/>
            <person name="Bautista V.R."/>
            <person name="Kim C.J."/>
            <person name="Ecker J.R."/>
        </authorList>
    </citation>
    <scope>NUCLEOTIDE SEQUENCE [LARGE SCALE MRNA]</scope>
    <source>
        <strain>cv. Columbia</strain>
    </source>
</reference>
<reference key="5">
    <citation type="journal article" date="2003" name="Plant Physiol.">
        <title>Arabidopsis contains a large superfamily of acyl-activating enzymes. Phylogenetic and biochemical analysis reveals a new class of acyl-coenzyme a synthetases.</title>
        <authorList>
            <person name="Shockey J.M."/>
            <person name="Fulda M.S."/>
            <person name="Browse J."/>
        </authorList>
    </citation>
    <scope>GENE FAMILY ORGANIZATION</scope>
</reference>
<accession>Q9T009</accession>
<accession>O81614</accession>
<accession>Q8LKS7</accession>
<protein>
    <recommendedName>
        <fullName>Long chain acyl-CoA synthetase 5</fullName>
        <ecNumber>6.2.1.3</ecNumber>
    </recommendedName>
</protein>
<feature type="chain" id="PRO_0000401413" description="Long chain acyl-CoA synthetase 5">
    <location>
        <begin position="1"/>
        <end position="666"/>
    </location>
</feature>
<feature type="region of interest" description="Fatty acid-binding" evidence="2">
    <location>
        <begin position="495"/>
        <end position="519"/>
    </location>
</feature>
<feature type="binding site" evidence="2">
    <location>
        <begin position="228"/>
        <end position="239"/>
    </location>
    <ligand>
        <name>ATP</name>
        <dbReference type="ChEBI" id="CHEBI:30616"/>
    </ligand>
</feature>
<feature type="sequence conflict" description="In Ref. 1; AAM28872." evidence="4" ref="1">
    <original>S</original>
    <variation>T</variation>
    <location>
        <position position="661"/>
    </location>
</feature>